<sequence>MSWSRSILCLLGAFANARSIPYYPPLSSDLVNHINKLNTTGRAGHNFHNTDMSYVKKLCGTFLGGPKAPERVDFAEDMDLPDTFDTRKQWPNCPTISEIRDQGSCGSCWAFGAVEAISDRICVHTNAKVSVEVSAEDLLSCCGFECGMGCNGGYPSGAWRYWTERGLVSGGLYDSHVGCRAYTIPPCEHHVNGSRPPCTGEGGETPRCSRHCEPGYSPSYKEDKHYGITSYGVPRSEKEIMAEIYKNGPVEGAFIVYEDFLMYKSGVYQHVSGEQVGGHAIRILGWGVENGTPYWLAANSWNTDWGITGFFKILRGEDHCGIESEIVAGVPRMEQYWTRV</sequence>
<comment type="function">
    <text>Thiol protease which is believed to participate in intracellular degradation and turnover of proteins. Has also been implicated in tumor invasion and metastasis.</text>
</comment>
<comment type="catalytic activity">
    <reaction>
        <text>Hydrolysis of proteins with broad specificity for peptide bonds. Preferentially cleaves -Arg-Arg-|-Xaa bonds in small molecule substrates (thus differing from cathepsin L). In addition to being an endopeptidase, shows peptidyl-dipeptidase activity, liberating C-terminal dipeptides.</text>
        <dbReference type="EC" id="3.4.22.1"/>
    </reaction>
</comment>
<comment type="subunit">
    <text>Dimer of a heavy chain and a light chain cross-linked by a disulfide bond.</text>
</comment>
<comment type="subcellular location">
    <subcellularLocation>
        <location>Lysosome</location>
    </subcellularLocation>
</comment>
<comment type="similarity">
    <text evidence="3 4 5">Belongs to the peptidase C1 family.</text>
</comment>
<dbReference type="EC" id="3.4.22.1"/>
<dbReference type="EMBL" id="U18083">
    <property type="protein sequence ID" value="AAA87075.1"/>
    <property type="molecule type" value="mRNA"/>
</dbReference>
<dbReference type="PIR" id="S58770">
    <property type="entry name" value="S58770"/>
</dbReference>
<dbReference type="SMR" id="P43233"/>
<dbReference type="FunCoup" id="P43233">
    <property type="interactions" value="2098"/>
</dbReference>
<dbReference type="STRING" id="9031.ENSGALP00000061589"/>
<dbReference type="MEROPS" id="C01.060"/>
<dbReference type="GlyCosmos" id="P43233">
    <property type="glycosylation" value="2 sites, No reported glycans"/>
</dbReference>
<dbReference type="GlyGen" id="P43233">
    <property type="glycosylation" value="2 sites"/>
</dbReference>
<dbReference type="PaxDb" id="9031-ENSGALP00000035933"/>
<dbReference type="VEuPathDB" id="HostDB:geneid_396329"/>
<dbReference type="eggNOG" id="KOG1543">
    <property type="taxonomic scope" value="Eukaryota"/>
</dbReference>
<dbReference type="InParanoid" id="P43233"/>
<dbReference type="OrthoDB" id="640249at2759"/>
<dbReference type="PhylomeDB" id="P43233"/>
<dbReference type="Proteomes" id="UP000000539">
    <property type="component" value="Unassembled WGS sequence"/>
</dbReference>
<dbReference type="GO" id="GO:0005615">
    <property type="term" value="C:extracellular space"/>
    <property type="evidence" value="ECO:0000318"/>
    <property type="project" value="GO_Central"/>
</dbReference>
<dbReference type="GO" id="GO:0005764">
    <property type="term" value="C:lysosome"/>
    <property type="evidence" value="ECO:0000318"/>
    <property type="project" value="GO_Central"/>
</dbReference>
<dbReference type="GO" id="GO:0004197">
    <property type="term" value="F:cysteine-type endopeptidase activity"/>
    <property type="evidence" value="ECO:0000318"/>
    <property type="project" value="GO_Central"/>
</dbReference>
<dbReference type="GO" id="GO:0060561">
    <property type="term" value="P:apoptotic process involved in morphogenesis"/>
    <property type="evidence" value="ECO:0000270"/>
    <property type="project" value="AgBase"/>
</dbReference>
<dbReference type="GO" id="GO:0051603">
    <property type="term" value="P:proteolysis involved in protein catabolic process"/>
    <property type="evidence" value="ECO:0000318"/>
    <property type="project" value="GO_Central"/>
</dbReference>
<dbReference type="CDD" id="cd02620">
    <property type="entry name" value="Peptidase_C1A_CathepsinB"/>
    <property type="match status" value="1"/>
</dbReference>
<dbReference type="FunFam" id="3.90.70.10:FF:000031">
    <property type="entry name" value="Cathepsin B"/>
    <property type="match status" value="1"/>
</dbReference>
<dbReference type="Gene3D" id="3.90.70.10">
    <property type="entry name" value="Cysteine proteinases"/>
    <property type="match status" value="1"/>
</dbReference>
<dbReference type="InterPro" id="IPR038765">
    <property type="entry name" value="Papain-like_cys_pep_sf"/>
</dbReference>
<dbReference type="InterPro" id="IPR025661">
    <property type="entry name" value="Pept_asp_AS"/>
</dbReference>
<dbReference type="InterPro" id="IPR000169">
    <property type="entry name" value="Pept_cys_AS"/>
</dbReference>
<dbReference type="InterPro" id="IPR025660">
    <property type="entry name" value="Pept_his_AS"/>
</dbReference>
<dbReference type="InterPro" id="IPR013128">
    <property type="entry name" value="Peptidase_C1A"/>
</dbReference>
<dbReference type="InterPro" id="IPR000668">
    <property type="entry name" value="Peptidase_C1A_C"/>
</dbReference>
<dbReference type="InterPro" id="IPR012599">
    <property type="entry name" value="Propeptide_C1A"/>
</dbReference>
<dbReference type="PANTHER" id="PTHR12411">
    <property type="entry name" value="CYSTEINE PROTEASE FAMILY C1-RELATED"/>
    <property type="match status" value="1"/>
</dbReference>
<dbReference type="Pfam" id="PF00112">
    <property type="entry name" value="Peptidase_C1"/>
    <property type="match status" value="1"/>
</dbReference>
<dbReference type="Pfam" id="PF08127">
    <property type="entry name" value="Propeptide_C1"/>
    <property type="match status" value="1"/>
</dbReference>
<dbReference type="PRINTS" id="PR00705">
    <property type="entry name" value="PAPAIN"/>
</dbReference>
<dbReference type="SMART" id="SM00645">
    <property type="entry name" value="Pept_C1"/>
    <property type="match status" value="1"/>
</dbReference>
<dbReference type="SUPFAM" id="SSF54001">
    <property type="entry name" value="Cysteine proteinases"/>
    <property type="match status" value="1"/>
</dbReference>
<dbReference type="PROSITE" id="PS00640">
    <property type="entry name" value="THIOL_PROTEASE_ASN"/>
    <property type="match status" value="1"/>
</dbReference>
<dbReference type="PROSITE" id="PS00139">
    <property type="entry name" value="THIOL_PROTEASE_CYS"/>
    <property type="match status" value="1"/>
</dbReference>
<dbReference type="PROSITE" id="PS00639">
    <property type="entry name" value="THIOL_PROTEASE_HIS"/>
    <property type="match status" value="1"/>
</dbReference>
<evidence type="ECO:0000250" key="1"/>
<evidence type="ECO:0000255" key="2"/>
<evidence type="ECO:0000255" key="3">
    <source>
        <dbReference type="PROSITE-ProRule" id="PRU10088"/>
    </source>
</evidence>
<evidence type="ECO:0000255" key="4">
    <source>
        <dbReference type="PROSITE-ProRule" id="PRU10089"/>
    </source>
</evidence>
<evidence type="ECO:0000255" key="5">
    <source>
        <dbReference type="PROSITE-ProRule" id="PRU10090"/>
    </source>
</evidence>
<keyword id="KW-1015">Disulfide bond</keyword>
<keyword id="KW-0325">Glycoprotein</keyword>
<keyword id="KW-0378">Hydrolase</keyword>
<keyword id="KW-0458">Lysosome</keyword>
<keyword id="KW-0645">Protease</keyword>
<keyword id="KW-1185">Reference proteome</keyword>
<keyword id="KW-0732">Signal</keyword>
<keyword id="KW-0788">Thiol protease</keyword>
<keyword id="KW-0865">Zymogen</keyword>
<feature type="signal peptide" evidence="2">
    <location>
        <begin position="1"/>
        <end position="17"/>
    </location>
</feature>
<feature type="propeptide" id="PRO_0000026158" description="Activation peptide" evidence="2">
    <location>
        <begin position="18"/>
        <end position="79"/>
    </location>
</feature>
<feature type="chain" id="PRO_0000026159" description="Cathepsin B">
    <location>
        <begin position="80"/>
        <end position="340"/>
    </location>
</feature>
<feature type="chain" id="PRO_0000026160" description="Cathepsin B light chain" evidence="1">
    <location>
        <begin position="80"/>
        <end position="126"/>
    </location>
</feature>
<feature type="chain" id="PRO_0000026161" description="Cathepsin B heavy chain" evidence="1">
    <location>
        <begin position="129"/>
        <end position="340"/>
    </location>
</feature>
<feature type="active site" evidence="1">
    <location>
        <position position="108"/>
    </location>
</feature>
<feature type="active site" evidence="1">
    <location>
        <position position="279"/>
    </location>
</feature>
<feature type="active site" evidence="1">
    <location>
        <position position="299"/>
    </location>
</feature>
<feature type="glycosylation site" description="N-linked (GlcNAc...) asparagine" evidence="2">
    <location>
        <position position="38"/>
    </location>
</feature>
<feature type="glycosylation site" description="N-linked (GlcNAc...) asparagine" evidence="2">
    <location>
        <position position="192"/>
    </location>
</feature>
<feature type="disulfide bond" evidence="1">
    <location>
        <begin position="93"/>
        <end position="122"/>
    </location>
</feature>
<feature type="disulfide bond" evidence="1">
    <location>
        <begin position="105"/>
        <end position="150"/>
    </location>
</feature>
<feature type="disulfide bond" evidence="1">
    <location>
        <begin position="141"/>
        <end position="208"/>
    </location>
</feature>
<feature type="disulfide bond" evidence="1">
    <location>
        <begin position="142"/>
        <end position="146"/>
    </location>
</feature>
<feature type="disulfide bond" evidence="1">
    <location>
        <begin position="179"/>
        <end position="212"/>
    </location>
</feature>
<feature type="disulfide bond" evidence="1">
    <location>
        <begin position="187"/>
        <end position="198"/>
    </location>
</feature>
<reference key="1">
    <citation type="journal article" date="1995" name="Biochim. Biophys. Acta">
        <title>Avian cathepsin B cDNA: sequence and demonstration that mRNAs of two sizes are produced in cell types producing large quantities of the enzyme.</title>
        <authorList>
            <person name="Dong S.S."/>
            <person name="Stransky G.I."/>
            <person name="Whitaker C.H."/>
            <person name="Jordan S.E."/>
            <person name="Schlesinger P.H."/>
            <person name="Edwards J.C."/>
            <person name="Blair H.C."/>
        </authorList>
    </citation>
    <scope>NUCLEOTIDE SEQUENCE [MRNA]</scope>
    <source>
        <strain>White leghorn</strain>
        <tissue>Bone</tissue>
    </source>
</reference>
<protein>
    <recommendedName>
        <fullName>Cathepsin B</fullName>
        <ecNumber>3.4.22.1</ecNumber>
    </recommendedName>
    <alternativeName>
        <fullName>Cathepsin B1</fullName>
    </alternativeName>
    <component>
        <recommendedName>
            <fullName>Cathepsin B light chain</fullName>
        </recommendedName>
    </component>
    <component>
        <recommendedName>
            <fullName>Cathepsin B heavy chain</fullName>
        </recommendedName>
    </component>
</protein>
<gene>
    <name type="primary">CTSB</name>
</gene>
<organism>
    <name type="scientific">Gallus gallus</name>
    <name type="common">Chicken</name>
    <dbReference type="NCBI Taxonomy" id="9031"/>
    <lineage>
        <taxon>Eukaryota</taxon>
        <taxon>Metazoa</taxon>
        <taxon>Chordata</taxon>
        <taxon>Craniata</taxon>
        <taxon>Vertebrata</taxon>
        <taxon>Euteleostomi</taxon>
        <taxon>Archelosauria</taxon>
        <taxon>Archosauria</taxon>
        <taxon>Dinosauria</taxon>
        <taxon>Saurischia</taxon>
        <taxon>Theropoda</taxon>
        <taxon>Coelurosauria</taxon>
        <taxon>Aves</taxon>
        <taxon>Neognathae</taxon>
        <taxon>Galloanserae</taxon>
        <taxon>Galliformes</taxon>
        <taxon>Phasianidae</taxon>
        <taxon>Phasianinae</taxon>
        <taxon>Gallus</taxon>
    </lineage>
</organism>
<accession>P43233</accession>
<name>CATB_CHICK</name>
<proteinExistence type="evidence at transcript level"/>